<comment type="function">
    <text evidence="1">Catalyzes the isomerization between 2-isopropylmalate and 3-isopropylmalate, via the formation of 2-isopropylmaleate.</text>
</comment>
<comment type="catalytic activity">
    <reaction evidence="1">
        <text>(2R,3S)-3-isopropylmalate = (2S)-2-isopropylmalate</text>
        <dbReference type="Rhea" id="RHEA:32287"/>
        <dbReference type="ChEBI" id="CHEBI:1178"/>
        <dbReference type="ChEBI" id="CHEBI:35121"/>
        <dbReference type="EC" id="4.2.1.33"/>
    </reaction>
</comment>
<comment type="pathway">
    <text evidence="1">Amino-acid biosynthesis; L-leucine biosynthesis; L-leucine from 3-methyl-2-oxobutanoate: step 2/4.</text>
</comment>
<comment type="subunit">
    <text evidence="1">Heterodimer of LeuC and LeuD.</text>
</comment>
<comment type="similarity">
    <text evidence="1">Belongs to the LeuD family. LeuD type 1 subfamily.</text>
</comment>
<gene>
    <name evidence="1" type="primary">leuD</name>
    <name type="ordered locus">PSPTO_2174</name>
</gene>
<feature type="chain" id="PRO_0000141862" description="3-isopropylmalate dehydratase small subunit">
    <location>
        <begin position="1"/>
        <end position="213"/>
    </location>
</feature>
<sequence length="213" mass="24068">MKAFTQHNGLVAPLDRANVDTDQIIPKQFLKSIKRTGFGPNLFDEWRYLDVGQPYQDNSKRPLNHDFVLNNARYQGASVLLARENFGCGSSREHAPWALEEYGFCAIIAPSYADIFFNNSFKNGLLPIILAEDDVDQLFKQVEASPGYQLRIDLQAQTVTRPDGEVLSFEIDAFRKHCLLNGLDDIGLTLMDADAIASFEGKHRASQPWLFRD</sequence>
<keyword id="KW-0028">Amino-acid biosynthesis</keyword>
<keyword id="KW-0100">Branched-chain amino acid biosynthesis</keyword>
<keyword id="KW-0432">Leucine biosynthesis</keyword>
<keyword id="KW-0456">Lyase</keyword>
<keyword id="KW-1185">Reference proteome</keyword>
<organism>
    <name type="scientific">Pseudomonas syringae pv. tomato (strain ATCC BAA-871 / DC3000)</name>
    <dbReference type="NCBI Taxonomy" id="223283"/>
    <lineage>
        <taxon>Bacteria</taxon>
        <taxon>Pseudomonadati</taxon>
        <taxon>Pseudomonadota</taxon>
        <taxon>Gammaproteobacteria</taxon>
        <taxon>Pseudomonadales</taxon>
        <taxon>Pseudomonadaceae</taxon>
        <taxon>Pseudomonas</taxon>
    </lineage>
</organism>
<evidence type="ECO:0000255" key="1">
    <source>
        <dbReference type="HAMAP-Rule" id="MF_01031"/>
    </source>
</evidence>
<proteinExistence type="inferred from homology"/>
<accession>Q884C1</accession>
<protein>
    <recommendedName>
        <fullName evidence="1">3-isopropylmalate dehydratase small subunit</fullName>
        <ecNumber evidence="1">4.2.1.33</ecNumber>
    </recommendedName>
    <alternativeName>
        <fullName evidence="1">Alpha-IPM isomerase</fullName>
        <shortName evidence="1">IPMI</shortName>
    </alternativeName>
    <alternativeName>
        <fullName evidence="1">Isopropylmalate isomerase</fullName>
    </alternativeName>
</protein>
<reference key="1">
    <citation type="journal article" date="2003" name="Proc. Natl. Acad. Sci. U.S.A.">
        <title>The complete genome sequence of the Arabidopsis and tomato pathogen Pseudomonas syringae pv. tomato DC3000.</title>
        <authorList>
            <person name="Buell C.R."/>
            <person name="Joardar V."/>
            <person name="Lindeberg M."/>
            <person name="Selengut J."/>
            <person name="Paulsen I.T."/>
            <person name="Gwinn M.L."/>
            <person name="Dodson R.J."/>
            <person name="DeBoy R.T."/>
            <person name="Durkin A.S."/>
            <person name="Kolonay J.F."/>
            <person name="Madupu R."/>
            <person name="Daugherty S.C."/>
            <person name="Brinkac L.M."/>
            <person name="Beanan M.J."/>
            <person name="Haft D.H."/>
            <person name="Nelson W.C."/>
            <person name="Davidsen T.M."/>
            <person name="Zafar N."/>
            <person name="Zhou L."/>
            <person name="Liu J."/>
            <person name="Yuan Q."/>
            <person name="Khouri H.M."/>
            <person name="Fedorova N.B."/>
            <person name="Tran B."/>
            <person name="Russell D."/>
            <person name="Berry K.J."/>
            <person name="Utterback T.R."/>
            <person name="Van Aken S.E."/>
            <person name="Feldblyum T.V."/>
            <person name="D'Ascenzo M."/>
            <person name="Deng W.-L."/>
            <person name="Ramos A.R."/>
            <person name="Alfano J.R."/>
            <person name="Cartinhour S."/>
            <person name="Chatterjee A.K."/>
            <person name="Delaney T.P."/>
            <person name="Lazarowitz S.G."/>
            <person name="Martin G.B."/>
            <person name="Schneider D.J."/>
            <person name="Tang X."/>
            <person name="Bender C.L."/>
            <person name="White O."/>
            <person name="Fraser C.M."/>
            <person name="Collmer A."/>
        </authorList>
    </citation>
    <scope>NUCLEOTIDE SEQUENCE [LARGE SCALE GENOMIC DNA]</scope>
    <source>
        <strain>ATCC BAA-871 / DC3000</strain>
    </source>
</reference>
<name>LEUD_PSESM</name>
<dbReference type="EC" id="4.2.1.33" evidence="1"/>
<dbReference type="EMBL" id="AE016853">
    <property type="protein sequence ID" value="AAO55691.1"/>
    <property type="molecule type" value="Genomic_DNA"/>
</dbReference>
<dbReference type="RefSeq" id="NP_791996.1">
    <property type="nucleotide sequence ID" value="NC_004578.1"/>
</dbReference>
<dbReference type="RefSeq" id="WP_011103886.1">
    <property type="nucleotide sequence ID" value="NC_004578.1"/>
</dbReference>
<dbReference type="SMR" id="Q884C1"/>
<dbReference type="STRING" id="223283.PSPTO_2174"/>
<dbReference type="GeneID" id="1183825"/>
<dbReference type="KEGG" id="pst:PSPTO_2174"/>
<dbReference type="PATRIC" id="fig|223283.9.peg.2205"/>
<dbReference type="eggNOG" id="COG0066">
    <property type="taxonomic scope" value="Bacteria"/>
</dbReference>
<dbReference type="HOGENOM" id="CLU_081378_0_3_6"/>
<dbReference type="OrthoDB" id="9777465at2"/>
<dbReference type="PhylomeDB" id="Q884C1"/>
<dbReference type="UniPathway" id="UPA00048">
    <property type="reaction ID" value="UER00071"/>
</dbReference>
<dbReference type="Proteomes" id="UP000002515">
    <property type="component" value="Chromosome"/>
</dbReference>
<dbReference type="GO" id="GO:0009316">
    <property type="term" value="C:3-isopropylmalate dehydratase complex"/>
    <property type="evidence" value="ECO:0007669"/>
    <property type="project" value="InterPro"/>
</dbReference>
<dbReference type="GO" id="GO:0003861">
    <property type="term" value="F:3-isopropylmalate dehydratase activity"/>
    <property type="evidence" value="ECO:0007669"/>
    <property type="project" value="UniProtKB-UniRule"/>
</dbReference>
<dbReference type="GO" id="GO:0009098">
    <property type="term" value="P:L-leucine biosynthetic process"/>
    <property type="evidence" value="ECO:0007669"/>
    <property type="project" value="UniProtKB-UniRule"/>
</dbReference>
<dbReference type="CDD" id="cd01577">
    <property type="entry name" value="IPMI_Swivel"/>
    <property type="match status" value="1"/>
</dbReference>
<dbReference type="FunFam" id="3.20.19.10:FF:000003">
    <property type="entry name" value="3-isopropylmalate dehydratase small subunit"/>
    <property type="match status" value="1"/>
</dbReference>
<dbReference type="Gene3D" id="3.20.19.10">
    <property type="entry name" value="Aconitase, domain 4"/>
    <property type="match status" value="1"/>
</dbReference>
<dbReference type="HAMAP" id="MF_01031">
    <property type="entry name" value="LeuD_type1"/>
    <property type="match status" value="1"/>
</dbReference>
<dbReference type="InterPro" id="IPR004431">
    <property type="entry name" value="3-IsopropMal_deHydase_ssu"/>
</dbReference>
<dbReference type="InterPro" id="IPR015928">
    <property type="entry name" value="Aconitase/3IPM_dehydase_swvl"/>
</dbReference>
<dbReference type="InterPro" id="IPR000573">
    <property type="entry name" value="AconitaseA/IPMdHydase_ssu_swvl"/>
</dbReference>
<dbReference type="InterPro" id="IPR033940">
    <property type="entry name" value="IPMI_Swivel"/>
</dbReference>
<dbReference type="InterPro" id="IPR050075">
    <property type="entry name" value="LeuD"/>
</dbReference>
<dbReference type="NCBIfam" id="TIGR00171">
    <property type="entry name" value="leuD"/>
    <property type="match status" value="1"/>
</dbReference>
<dbReference type="NCBIfam" id="NF002458">
    <property type="entry name" value="PRK01641.1"/>
    <property type="match status" value="1"/>
</dbReference>
<dbReference type="PANTHER" id="PTHR43345:SF5">
    <property type="entry name" value="3-ISOPROPYLMALATE DEHYDRATASE SMALL SUBUNIT"/>
    <property type="match status" value="1"/>
</dbReference>
<dbReference type="PANTHER" id="PTHR43345">
    <property type="entry name" value="3-ISOPROPYLMALATE DEHYDRATASE SMALL SUBUNIT 2-RELATED-RELATED"/>
    <property type="match status" value="1"/>
</dbReference>
<dbReference type="Pfam" id="PF00694">
    <property type="entry name" value="Aconitase_C"/>
    <property type="match status" value="1"/>
</dbReference>
<dbReference type="SUPFAM" id="SSF52016">
    <property type="entry name" value="LeuD/IlvD-like"/>
    <property type="match status" value="1"/>
</dbReference>